<organism>
    <name type="scientific">Shigella flexneri serotype 5b (strain 8401)</name>
    <dbReference type="NCBI Taxonomy" id="373384"/>
    <lineage>
        <taxon>Bacteria</taxon>
        <taxon>Pseudomonadati</taxon>
        <taxon>Pseudomonadota</taxon>
        <taxon>Gammaproteobacteria</taxon>
        <taxon>Enterobacterales</taxon>
        <taxon>Enterobacteriaceae</taxon>
        <taxon>Shigella</taxon>
    </lineage>
</organism>
<protein>
    <recommendedName>
        <fullName evidence="1">Tryptophan synthase beta chain</fullName>
        <ecNumber evidence="1">4.2.1.20</ecNumber>
    </recommendedName>
</protein>
<evidence type="ECO:0000255" key="1">
    <source>
        <dbReference type="HAMAP-Rule" id="MF_00133"/>
    </source>
</evidence>
<name>TRPB_SHIF8</name>
<comment type="function">
    <text evidence="1">The beta subunit is responsible for the synthesis of L-tryptophan from indole and L-serine.</text>
</comment>
<comment type="catalytic activity">
    <reaction evidence="1">
        <text>(1S,2R)-1-C-(indol-3-yl)glycerol 3-phosphate + L-serine = D-glyceraldehyde 3-phosphate + L-tryptophan + H2O</text>
        <dbReference type="Rhea" id="RHEA:10532"/>
        <dbReference type="ChEBI" id="CHEBI:15377"/>
        <dbReference type="ChEBI" id="CHEBI:33384"/>
        <dbReference type="ChEBI" id="CHEBI:57912"/>
        <dbReference type="ChEBI" id="CHEBI:58866"/>
        <dbReference type="ChEBI" id="CHEBI:59776"/>
        <dbReference type="EC" id="4.2.1.20"/>
    </reaction>
</comment>
<comment type="cofactor">
    <cofactor evidence="1">
        <name>pyridoxal 5'-phosphate</name>
        <dbReference type="ChEBI" id="CHEBI:597326"/>
    </cofactor>
</comment>
<comment type="pathway">
    <text evidence="1">Amino-acid biosynthesis; L-tryptophan biosynthesis; L-tryptophan from chorismate: step 5/5.</text>
</comment>
<comment type="subunit">
    <text evidence="1">Tetramer of two alpha and two beta chains.</text>
</comment>
<comment type="similarity">
    <text evidence="1">Belongs to the TrpB family.</text>
</comment>
<keyword id="KW-0028">Amino-acid biosynthesis</keyword>
<keyword id="KW-0057">Aromatic amino acid biosynthesis</keyword>
<keyword id="KW-0456">Lyase</keyword>
<keyword id="KW-0663">Pyridoxal phosphate</keyword>
<keyword id="KW-0822">Tryptophan biosynthesis</keyword>
<dbReference type="EC" id="4.2.1.20" evidence="1"/>
<dbReference type="EMBL" id="CP000266">
    <property type="protein sequence ID" value="ABF03480.1"/>
    <property type="molecule type" value="Genomic_DNA"/>
</dbReference>
<dbReference type="RefSeq" id="WP_000209520.1">
    <property type="nucleotide sequence ID" value="NC_008258.1"/>
</dbReference>
<dbReference type="SMR" id="Q0T5D5"/>
<dbReference type="GeneID" id="75203373"/>
<dbReference type="KEGG" id="sfv:SFV_1275"/>
<dbReference type="HOGENOM" id="CLU_016734_3_1_6"/>
<dbReference type="UniPathway" id="UPA00035">
    <property type="reaction ID" value="UER00044"/>
</dbReference>
<dbReference type="Proteomes" id="UP000000659">
    <property type="component" value="Chromosome"/>
</dbReference>
<dbReference type="GO" id="GO:0005737">
    <property type="term" value="C:cytoplasm"/>
    <property type="evidence" value="ECO:0007669"/>
    <property type="project" value="TreeGrafter"/>
</dbReference>
<dbReference type="GO" id="GO:0004834">
    <property type="term" value="F:tryptophan synthase activity"/>
    <property type="evidence" value="ECO:0007669"/>
    <property type="project" value="UniProtKB-UniRule"/>
</dbReference>
<dbReference type="CDD" id="cd06446">
    <property type="entry name" value="Trp-synth_B"/>
    <property type="match status" value="1"/>
</dbReference>
<dbReference type="FunFam" id="3.40.50.1100:FF:000001">
    <property type="entry name" value="Tryptophan synthase beta chain"/>
    <property type="match status" value="1"/>
</dbReference>
<dbReference type="FunFam" id="3.40.50.1100:FF:000004">
    <property type="entry name" value="Tryptophan synthase beta chain"/>
    <property type="match status" value="1"/>
</dbReference>
<dbReference type="Gene3D" id="3.40.50.1100">
    <property type="match status" value="2"/>
</dbReference>
<dbReference type="HAMAP" id="MF_00133">
    <property type="entry name" value="Trp_synth_beta"/>
    <property type="match status" value="1"/>
</dbReference>
<dbReference type="InterPro" id="IPR006653">
    <property type="entry name" value="Trp_synth_b_CS"/>
</dbReference>
<dbReference type="InterPro" id="IPR006654">
    <property type="entry name" value="Trp_synth_beta"/>
</dbReference>
<dbReference type="InterPro" id="IPR023026">
    <property type="entry name" value="Trp_synth_beta/beta-like"/>
</dbReference>
<dbReference type="InterPro" id="IPR001926">
    <property type="entry name" value="TrpB-like_PALP"/>
</dbReference>
<dbReference type="InterPro" id="IPR036052">
    <property type="entry name" value="TrpB-like_PALP_sf"/>
</dbReference>
<dbReference type="NCBIfam" id="TIGR00263">
    <property type="entry name" value="trpB"/>
    <property type="match status" value="1"/>
</dbReference>
<dbReference type="PANTHER" id="PTHR48077:SF3">
    <property type="entry name" value="TRYPTOPHAN SYNTHASE"/>
    <property type="match status" value="1"/>
</dbReference>
<dbReference type="PANTHER" id="PTHR48077">
    <property type="entry name" value="TRYPTOPHAN SYNTHASE-RELATED"/>
    <property type="match status" value="1"/>
</dbReference>
<dbReference type="Pfam" id="PF00291">
    <property type="entry name" value="PALP"/>
    <property type="match status" value="1"/>
</dbReference>
<dbReference type="PIRSF" id="PIRSF001413">
    <property type="entry name" value="Trp_syn_beta"/>
    <property type="match status" value="1"/>
</dbReference>
<dbReference type="SUPFAM" id="SSF53686">
    <property type="entry name" value="Tryptophan synthase beta subunit-like PLP-dependent enzymes"/>
    <property type="match status" value="1"/>
</dbReference>
<dbReference type="PROSITE" id="PS00168">
    <property type="entry name" value="TRP_SYNTHASE_BETA"/>
    <property type="match status" value="1"/>
</dbReference>
<gene>
    <name evidence="1" type="primary">trpB</name>
    <name type="ordered locus">SFV_1275</name>
</gene>
<accession>Q0T5D5</accession>
<feature type="chain" id="PRO_1000018398" description="Tryptophan synthase beta chain">
    <location>
        <begin position="1"/>
        <end position="397"/>
    </location>
</feature>
<feature type="modified residue" description="N6-(pyridoxal phosphate)lysine" evidence="1">
    <location>
        <position position="87"/>
    </location>
</feature>
<proteinExistence type="inferred from homology"/>
<sequence>MTTLLNPYFGEFGGMYVPQILMPALRQLEEAFVSAQKDPEFQAQFNDLLKNYAGRPTALTKCQNITAGTNTTLYLKREDLLHGGAHKTNQVLGQALLAKRMGKTEIIAETGAGQHGVASALASALLGLKCRIYMGAKDVERQSPNVFRMRLMGAEVIPVHSGSATLKDACNEALRDWSGSYETAHYMLGTAAGPHPYPTIVREFQRMIGEETKAQILEREGRLPDAVIACVGGGSNAIGMFADFINETNVGLIGVEPGGHGIETGEHGAPLKHGRVGIYFGMKAPMMQTEDGQIEESYSISAGLDFPSVGPQHAYLNSTGRADYVSITDDEALEAFKTLCLHEGIIPALESSHALAHALKMMRENPDKEQLLVVNLSGRGDKDIFTVHDILKARGEI</sequence>
<reference key="1">
    <citation type="journal article" date="2006" name="BMC Genomics">
        <title>Complete genome sequence of Shigella flexneri 5b and comparison with Shigella flexneri 2a.</title>
        <authorList>
            <person name="Nie H."/>
            <person name="Yang F."/>
            <person name="Zhang X."/>
            <person name="Yang J."/>
            <person name="Chen L."/>
            <person name="Wang J."/>
            <person name="Xiong Z."/>
            <person name="Peng J."/>
            <person name="Sun L."/>
            <person name="Dong J."/>
            <person name="Xue Y."/>
            <person name="Xu X."/>
            <person name="Chen S."/>
            <person name="Yao Z."/>
            <person name="Shen Y."/>
            <person name="Jin Q."/>
        </authorList>
    </citation>
    <scope>NUCLEOTIDE SEQUENCE [LARGE SCALE GENOMIC DNA]</scope>
    <source>
        <strain>8401</strain>
    </source>
</reference>